<name>GLH2_CAEEL</name>
<sequence length="974" mass="100396">MSDDWDNNTAAAKTISFGSNPSGFGGGSGFGSGNTGGFGSGNAGGTGFGSSNNGGSGFGGNNNVGPRFGNGNAGGTGFGSGNAGGTGFGSGNAGGTGFGSGNAGGTGFGSGNAGGTGFGGGNAGGTGFGSGNAGGTGLGSGNAGGTGFGSGNAGGTGFGSGNAGGTGFGSGKAGGTGFGSGKAGGTGFGGNSNSGSGFGSGLTNGFGSGNNHESGFGGGKSGGFGGGNSGGSGFGSGGNSNGFGSGGGGQDRGERNNNCFNCQQPGHRSNDCPEPKKEREPRVCYNCQQPGHNSRDCPEERKPREGRNGFTGGSSGFGGGNGGGTGFDSGLTNGFGSGNNGESGFGSGGFGGNSNGFGSGGGGQDRGERNNNCFNCQQPGHRSNDCPEPKKEREPRVCYNCQQPGHNSRDCPEERKPREGRNGFTSGFGGGNDGGFGGGNAEGFGNNEERGPMKCFNCKGEGHRSAECPEPPRGCFNCGEQGHRSNECPNPAKPREGAEGEGPKATYVPVEDNMEEVFNMQKISEGLMFNKFFDAEVKITSDKKPVGVKTCKTFSEANLGETMKKNVAHAGYTKTTPIQQYTLPLIHQGHDIMACAQTGSGKTAAFLLPIMARLIDENDLNTAGEGGCYPRCIILTPTRELTDQIYNEGRKFAYQTMMEIRPVYGGLAVGYNKGQIEKGATIIVGTVGRIKHFCEEGTIKLDKCRFFVLDEADRMIDAMGFGTDIDTIVNYESMPKKENRQTLMFSATFPDSVQEAARNHLKEGYIMLAIDKIGAANKCVLQEFEKCDRSEKKDKLLEILGIDIDSYTTEKNSEVYTKKTIVFVSQRAMADTLASILSSAQVPAITIHGAREQRERSEALRQFRNGSKPVLIATAVAERGLDIKGVDHVINYDMPDNIDDYIHRIGRTGRVGNAGRATSFISEDCNLLSELVRVLSDADQLVPEWMQGASGGNFGASFGFESSVPTQKQDEDCW</sequence>
<dbReference type="EC" id="3.6.4.13"/>
<dbReference type="EMBL" id="U60194">
    <property type="protein sequence ID" value="AAB03337.1"/>
    <property type="molecule type" value="mRNA"/>
</dbReference>
<dbReference type="EMBL" id="U60449">
    <property type="protein sequence ID" value="AAB03510.1"/>
    <property type="molecule type" value="Genomic_DNA"/>
</dbReference>
<dbReference type="EMBL" id="FO080958">
    <property type="protein sequence ID" value="CCD68088.1"/>
    <property type="molecule type" value="Genomic_DNA"/>
</dbReference>
<dbReference type="RefSeq" id="NP_491876.1">
    <property type="nucleotide sequence ID" value="NM_059475.6"/>
</dbReference>
<dbReference type="SMR" id="Q966L9"/>
<dbReference type="BioGRID" id="37812">
    <property type="interactions" value="6"/>
</dbReference>
<dbReference type="FunCoup" id="Q966L9">
    <property type="interactions" value="59"/>
</dbReference>
<dbReference type="IntAct" id="Q966L9">
    <property type="interactions" value="1"/>
</dbReference>
<dbReference type="STRING" id="6239.C55B7.1.1"/>
<dbReference type="iPTMnet" id="Q966L9"/>
<dbReference type="PaxDb" id="6239-C55B7.1"/>
<dbReference type="PeptideAtlas" id="Q966L9"/>
<dbReference type="EnsemblMetazoa" id="C55B7.1.1">
    <property type="protein sequence ID" value="C55B7.1.1"/>
    <property type="gene ID" value="WBGene00001599"/>
</dbReference>
<dbReference type="GeneID" id="172361"/>
<dbReference type="KEGG" id="cel:CELE_C55B7.1"/>
<dbReference type="UCSC" id="C55B7.1.2">
    <property type="organism name" value="c. elegans"/>
</dbReference>
<dbReference type="AGR" id="WB:WBGene00001599"/>
<dbReference type="CTD" id="172361"/>
<dbReference type="WormBase" id="C55B7.1">
    <property type="protein sequence ID" value="CE09012"/>
    <property type="gene ID" value="WBGene00001599"/>
    <property type="gene designation" value="glh-2"/>
</dbReference>
<dbReference type="eggNOG" id="KOG0335">
    <property type="taxonomic scope" value="Eukaryota"/>
</dbReference>
<dbReference type="GeneTree" id="ENSGT00940000157507"/>
<dbReference type="HOGENOM" id="CLU_003041_16_3_1"/>
<dbReference type="InParanoid" id="Q966L9"/>
<dbReference type="OMA" id="NWNDNGN"/>
<dbReference type="OrthoDB" id="196131at2759"/>
<dbReference type="PhylomeDB" id="Q966L9"/>
<dbReference type="SignaLink" id="Q966L9"/>
<dbReference type="CD-CODE" id="73A75392">
    <property type="entry name" value="P-granule"/>
</dbReference>
<dbReference type="PRO" id="PR:Q966L9"/>
<dbReference type="Proteomes" id="UP000001940">
    <property type="component" value="Chromosome I"/>
</dbReference>
<dbReference type="Bgee" id="WBGene00001599">
    <property type="expression patterns" value="Expressed in reproductive system and 5 other cell types or tissues"/>
</dbReference>
<dbReference type="GO" id="GO:0005634">
    <property type="term" value="C:nucleus"/>
    <property type="evidence" value="ECO:0000318"/>
    <property type="project" value="GO_Central"/>
</dbReference>
<dbReference type="GO" id="GO:0043186">
    <property type="term" value="C:P granule"/>
    <property type="evidence" value="ECO:0000314"/>
    <property type="project" value="WormBase"/>
</dbReference>
<dbReference type="GO" id="GO:0005524">
    <property type="term" value="F:ATP binding"/>
    <property type="evidence" value="ECO:0007669"/>
    <property type="project" value="UniProtKB-KW"/>
</dbReference>
<dbReference type="GO" id="GO:0016887">
    <property type="term" value="F:ATP hydrolysis activity"/>
    <property type="evidence" value="ECO:0007669"/>
    <property type="project" value="RHEA"/>
</dbReference>
<dbReference type="GO" id="GO:0008432">
    <property type="term" value="F:JUN kinase binding"/>
    <property type="evidence" value="ECO:0000353"/>
    <property type="project" value="WormBase"/>
</dbReference>
<dbReference type="GO" id="GO:0003729">
    <property type="term" value="F:mRNA binding"/>
    <property type="evidence" value="ECO:0000318"/>
    <property type="project" value="GO_Central"/>
</dbReference>
<dbReference type="GO" id="GO:0003724">
    <property type="term" value="F:RNA helicase activity"/>
    <property type="evidence" value="ECO:0000314"/>
    <property type="project" value="WormBase"/>
</dbReference>
<dbReference type="GO" id="GO:0008270">
    <property type="term" value="F:zinc ion binding"/>
    <property type="evidence" value="ECO:0007669"/>
    <property type="project" value="UniProtKB-KW"/>
</dbReference>
<dbReference type="GO" id="GO:0030154">
    <property type="term" value="P:cell differentiation"/>
    <property type="evidence" value="ECO:0000318"/>
    <property type="project" value="GO_Central"/>
</dbReference>
<dbReference type="GO" id="GO:0007276">
    <property type="term" value="P:gamete generation"/>
    <property type="evidence" value="ECO:0000318"/>
    <property type="project" value="GO_Central"/>
</dbReference>
<dbReference type="GO" id="GO:0007281">
    <property type="term" value="P:germ cell development"/>
    <property type="evidence" value="ECO:0000315"/>
    <property type="project" value="WormBase"/>
</dbReference>
<dbReference type="GO" id="GO:0009791">
    <property type="term" value="P:post-embryonic development"/>
    <property type="evidence" value="ECO:0000315"/>
    <property type="project" value="WormBase"/>
</dbReference>
<dbReference type="GO" id="GO:0016070">
    <property type="term" value="P:RNA metabolic process"/>
    <property type="evidence" value="ECO:0000250"/>
    <property type="project" value="WormBase"/>
</dbReference>
<dbReference type="CDD" id="cd18787">
    <property type="entry name" value="SF2_C_DEAD"/>
    <property type="match status" value="1"/>
</dbReference>
<dbReference type="FunFam" id="4.10.60.10:FF:000144">
    <property type="entry name" value="ATP-dependent RNA helicase glh-2"/>
    <property type="match status" value="2"/>
</dbReference>
<dbReference type="FunFam" id="3.40.50.300:FF:000008">
    <property type="entry name" value="ATP-dependent RNA helicase RhlB"/>
    <property type="match status" value="1"/>
</dbReference>
<dbReference type="FunFam" id="3.40.50.300:FF:000657">
    <property type="entry name" value="Probable ATP-dependent RNA helicase DDX41"/>
    <property type="match status" value="1"/>
</dbReference>
<dbReference type="Gene3D" id="3.40.50.300">
    <property type="entry name" value="P-loop containing nucleotide triphosphate hydrolases"/>
    <property type="match status" value="2"/>
</dbReference>
<dbReference type="Gene3D" id="4.10.60.10">
    <property type="entry name" value="Zinc finger, CCHC-type"/>
    <property type="match status" value="3"/>
</dbReference>
<dbReference type="InterPro" id="IPR011545">
    <property type="entry name" value="DEAD/DEAH_box_helicase_dom"/>
</dbReference>
<dbReference type="InterPro" id="IPR014001">
    <property type="entry name" value="Helicase_ATP-bd"/>
</dbReference>
<dbReference type="InterPro" id="IPR001650">
    <property type="entry name" value="Helicase_C-like"/>
</dbReference>
<dbReference type="InterPro" id="IPR027417">
    <property type="entry name" value="P-loop_NTPase"/>
</dbReference>
<dbReference type="InterPro" id="IPR000629">
    <property type="entry name" value="RNA-helicase_DEAD-box_CS"/>
</dbReference>
<dbReference type="InterPro" id="IPR014014">
    <property type="entry name" value="RNA_helicase_DEAD_Q_motif"/>
</dbReference>
<dbReference type="InterPro" id="IPR001878">
    <property type="entry name" value="Znf_CCHC"/>
</dbReference>
<dbReference type="InterPro" id="IPR036875">
    <property type="entry name" value="Znf_CCHC_sf"/>
</dbReference>
<dbReference type="PANTHER" id="PTHR47958">
    <property type="entry name" value="ATP-DEPENDENT RNA HELICASE DBP3"/>
    <property type="match status" value="1"/>
</dbReference>
<dbReference type="Pfam" id="PF00270">
    <property type="entry name" value="DEAD"/>
    <property type="match status" value="1"/>
</dbReference>
<dbReference type="Pfam" id="PF00271">
    <property type="entry name" value="Helicase_C"/>
    <property type="match status" value="1"/>
</dbReference>
<dbReference type="Pfam" id="PF00098">
    <property type="entry name" value="zf-CCHC"/>
    <property type="match status" value="6"/>
</dbReference>
<dbReference type="SMART" id="SM00487">
    <property type="entry name" value="DEXDc"/>
    <property type="match status" value="1"/>
</dbReference>
<dbReference type="SMART" id="SM00490">
    <property type="entry name" value="HELICc"/>
    <property type="match status" value="1"/>
</dbReference>
<dbReference type="SMART" id="SM00343">
    <property type="entry name" value="ZnF_C2HC"/>
    <property type="match status" value="6"/>
</dbReference>
<dbReference type="SUPFAM" id="SSF52540">
    <property type="entry name" value="P-loop containing nucleoside triphosphate hydrolases"/>
    <property type="match status" value="1"/>
</dbReference>
<dbReference type="SUPFAM" id="SSF57756">
    <property type="entry name" value="Retrovirus zinc finger-like domains"/>
    <property type="match status" value="3"/>
</dbReference>
<dbReference type="PROSITE" id="PS00039">
    <property type="entry name" value="DEAD_ATP_HELICASE"/>
    <property type="match status" value="1"/>
</dbReference>
<dbReference type="PROSITE" id="PS51192">
    <property type="entry name" value="HELICASE_ATP_BIND_1"/>
    <property type="match status" value="1"/>
</dbReference>
<dbReference type="PROSITE" id="PS51194">
    <property type="entry name" value="HELICASE_CTER"/>
    <property type="match status" value="1"/>
</dbReference>
<dbReference type="PROSITE" id="PS51195">
    <property type="entry name" value="Q_MOTIF"/>
    <property type="match status" value="1"/>
</dbReference>
<dbReference type="PROSITE" id="PS50158">
    <property type="entry name" value="ZF_CCHC"/>
    <property type="match status" value="6"/>
</dbReference>
<proteinExistence type="evidence at protein level"/>
<organism>
    <name type="scientific">Caenorhabditis elegans</name>
    <dbReference type="NCBI Taxonomy" id="6239"/>
    <lineage>
        <taxon>Eukaryota</taxon>
        <taxon>Metazoa</taxon>
        <taxon>Ecdysozoa</taxon>
        <taxon>Nematoda</taxon>
        <taxon>Chromadorea</taxon>
        <taxon>Rhabditida</taxon>
        <taxon>Rhabditina</taxon>
        <taxon>Rhabditomorpha</taxon>
        <taxon>Rhabditoidea</taxon>
        <taxon>Rhabditidae</taxon>
        <taxon>Peloderinae</taxon>
        <taxon>Caenorhabditis</taxon>
    </lineage>
</organism>
<protein>
    <recommendedName>
        <fullName>ATP-dependent RNA helicase glh-2</fullName>
        <ecNumber>3.6.4.13</ecNumber>
    </recommendedName>
    <alternativeName>
        <fullName>Germline helicase 2</fullName>
    </alternativeName>
</protein>
<evidence type="ECO:0000255" key="1">
    <source>
        <dbReference type="PROSITE-ProRule" id="PRU00047"/>
    </source>
</evidence>
<evidence type="ECO:0000255" key="2">
    <source>
        <dbReference type="PROSITE-ProRule" id="PRU00541"/>
    </source>
</evidence>
<evidence type="ECO:0000255" key="3">
    <source>
        <dbReference type="PROSITE-ProRule" id="PRU00542"/>
    </source>
</evidence>
<evidence type="ECO:0000256" key="4">
    <source>
        <dbReference type="SAM" id="MobiDB-lite"/>
    </source>
</evidence>
<evidence type="ECO:0000269" key="5">
    <source>
    </source>
</evidence>
<evidence type="ECO:0000305" key="6"/>
<comment type="function">
    <text>Probable ATP-binding RNA helicase.</text>
</comment>
<comment type="catalytic activity">
    <reaction>
        <text>ATP + H2O = ADP + phosphate + H(+)</text>
        <dbReference type="Rhea" id="RHEA:13065"/>
        <dbReference type="ChEBI" id="CHEBI:15377"/>
        <dbReference type="ChEBI" id="CHEBI:15378"/>
        <dbReference type="ChEBI" id="CHEBI:30616"/>
        <dbReference type="ChEBI" id="CHEBI:43474"/>
        <dbReference type="ChEBI" id="CHEBI:456216"/>
        <dbReference type="EC" id="3.6.4.13"/>
    </reaction>
</comment>
<comment type="subunit">
    <text evidence="5">Interacts (via C-terminus) with kgb-1.</text>
</comment>
<comment type="interaction">
    <interactant intactId="EBI-1571876">
        <id>Q966L9</id>
    </interactant>
    <interactant intactId="EBI-319489">
        <id>O44408</id>
        <label>kgb-1</label>
    </interactant>
    <organismsDiffer>false</organismsDiffer>
    <experiments>2</experiments>
</comment>
<comment type="developmental stage">
    <text>During germline proliferation.</text>
</comment>
<comment type="similarity">
    <text evidence="6">Belongs to the DEAD box helicase family. DDX4/VASA subfamily.</text>
</comment>
<accession>Q966L9</accession>
<accession>Q27376</accession>
<feature type="chain" id="PRO_0000055090" description="ATP-dependent RNA helicase glh-2">
    <location>
        <begin position="1"/>
        <end position="974"/>
    </location>
</feature>
<feature type="domain" description="Helicase ATP-binding" evidence="2">
    <location>
        <begin position="583"/>
        <end position="767"/>
    </location>
</feature>
<feature type="domain" description="Helicase C-terminal" evidence="3">
    <location>
        <begin position="803"/>
        <end position="950"/>
    </location>
</feature>
<feature type="zinc finger region" description="CCHC-type 1" evidence="1">
    <location>
        <begin position="257"/>
        <end position="274"/>
    </location>
</feature>
<feature type="zinc finger region" description="CCHC-type 2" evidence="1">
    <location>
        <begin position="282"/>
        <end position="299"/>
    </location>
</feature>
<feature type="zinc finger region" description="CCHC-type 3" evidence="1">
    <location>
        <begin position="371"/>
        <end position="388"/>
    </location>
</feature>
<feature type="zinc finger region" description="CCHC-type 4" evidence="1">
    <location>
        <begin position="396"/>
        <end position="413"/>
    </location>
</feature>
<feature type="zinc finger region" description="CCHC-type 5" evidence="1">
    <location>
        <begin position="453"/>
        <end position="470"/>
    </location>
</feature>
<feature type="zinc finger region" description="CCHC-type 6" evidence="1">
    <location>
        <begin position="473"/>
        <end position="490"/>
    </location>
</feature>
<feature type="region of interest" description="Disordered" evidence="4">
    <location>
        <begin position="212"/>
        <end position="435"/>
    </location>
</feature>
<feature type="short sequence motif" description="Q motif">
    <location>
        <begin position="552"/>
        <end position="580"/>
    </location>
</feature>
<feature type="short sequence motif" description="DEAD box">
    <location>
        <begin position="710"/>
        <end position="713"/>
    </location>
</feature>
<feature type="compositionally biased region" description="Gly residues" evidence="4">
    <location>
        <begin position="215"/>
        <end position="250"/>
    </location>
</feature>
<feature type="compositionally biased region" description="Polar residues" evidence="4">
    <location>
        <begin position="256"/>
        <end position="267"/>
    </location>
</feature>
<feature type="compositionally biased region" description="Basic and acidic residues" evidence="4">
    <location>
        <begin position="268"/>
        <end position="282"/>
    </location>
</feature>
<feature type="compositionally biased region" description="Basic and acidic residues" evidence="4">
    <location>
        <begin position="293"/>
        <end position="307"/>
    </location>
</feature>
<feature type="compositionally biased region" description="Gly residues" evidence="4">
    <location>
        <begin position="309"/>
        <end position="364"/>
    </location>
</feature>
<feature type="compositionally biased region" description="Polar residues" evidence="4">
    <location>
        <begin position="370"/>
        <end position="381"/>
    </location>
</feature>
<feature type="compositionally biased region" description="Basic and acidic residues" evidence="4">
    <location>
        <begin position="382"/>
        <end position="396"/>
    </location>
</feature>
<feature type="compositionally biased region" description="Basic and acidic residues" evidence="4">
    <location>
        <begin position="407"/>
        <end position="421"/>
    </location>
</feature>
<feature type="compositionally biased region" description="Gly residues" evidence="4">
    <location>
        <begin position="426"/>
        <end position="435"/>
    </location>
</feature>
<feature type="binding site" evidence="2">
    <location>
        <begin position="596"/>
        <end position="603"/>
    </location>
    <ligand>
        <name>ATP</name>
        <dbReference type="ChEBI" id="CHEBI:30616"/>
    </ligand>
</feature>
<feature type="sequence conflict" description="In Ref. 1; AAB03510/AAB03337." evidence="6" ref="1">
    <original>G</original>
    <variation>S</variation>
    <location>
        <position position="120"/>
    </location>
</feature>
<keyword id="KW-0067">ATP-binding</keyword>
<keyword id="KW-0347">Helicase</keyword>
<keyword id="KW-0378">Hydrolase</keyword>
<keyword id="KW-0479">Metal-binding</keyword>
<keyword id="KW-0547">Nucleotide-binding</keyword>
<keyword id="KW-1185">Reference proteome</keyword>
<keyword id="KW-0677">Repeat</keyword>
<keyword id="KW-0694">RNA-binding</keyword>
<keyword id="KW-0862">Zinc</keyword>
<keyword id="KW-0863">Zinc-finger</keyword>
<gene>
    <name type="primary">glh-2</name>
    <name type="ORF">C55B7.1</name>
</gene>
<reference key="1">
    <citation type="journal article" date="1996" name="Proc. Natl. Acad. Sci. U.S.A.">
        <title>Multiple potential germ-line helicases are components of the germ-line-specific P granules of Caenorhabditis elegans.</title>
        <authorList>
            <person name="Gruidl M.E."/>
            <person name="Smith P.A."/>
            <person name="Kuznicki K.A."/>
            <person name="McCrone J.S."/>
            <person name="Kirchner J."/>
            <person name="Roussell D.L."/>
            <person name="Strome S."/>
            <person name="Bennett K.L."/>
        </authorList>
    </citation>
    <scope>NUCLEOTIDE SEQUENCE [GENOMIC DNA / MRNA]</scope>
    <source>
        <strain>Bristol N2</strain>
    </source>
</reference>
<reference key="2">
    <citation type="journal article" date="1998" name="Science">
        <title>Genome sequence of the nematode C. elegans: a platform for investigating biology.</title>
        <authorList>
            <consortium name="The C. elegans sequencing consortium"/>
        </authorList>
    </citation>
    <scope>NUCLEOTIDE SEQUENCE [LARGE SCALE GENOMIC DNA]</scope>
    <source>
        <strain>Bristol N2</strain>
    </source>
</reference>
<reference key="3">
    <citation type="journal article" date="2002" name="Dev. Biol.">
        <title>The GLH proteins, Caenorhabditis elegans P granule components, associate with CSN-5 and KGB-1, proteins necessary for fertility, and with ZYX-1, a predicted cytoskeletal protein.</title>
        <authorList>
            <person name="Smith P."/>
            <person name="Leung-Chiu W.-M."/>
            <person name="Montgomery R."/>
            <person name="Orsborn A."/>
            <person name="Kuznicki K."/>
            <person name="Gressman-Coberly E."/>
            <person name="Mutapcic L."/>
            <person name="Bennett K."/>
        </authorList>
    </citation>
    <scope>INTERACTION WITH KGB-1</scope>
</reference>